<evidence type="ECO:0000250" key="1"/>
<evidence type="ECO:0000255" key="2">
    <source>
        <dbReference type="HAMAP-Rule" id="MF_00047"/>
    </source>
</evidence>
<dbReference type="EC" id="6.3.2.4" evidence="2"/>
<dbReference type="EMBL" id="CP001091">
    <property type="protein sequence ID" value="ACE60672.1"/>
    <property type="molecule type" value="Genomic_DNA"/>
</dbReference>
<dbReference type="RefSeq" id="WP_005595616.1">
    <property type="nucleotide sequence ID" value="NC_010939.1"/>
</dbReference>
<dbReference type="SMR" id="B3GZL0"/>
<dbReference type="GeneID" id="48598161"/>
<dbReference type="KEGG" id="apa:APP7_0020"/>
<dbReference type="HOGENOM" id="CLU_039268_1_2_6"/>
<dbReference type="UniPathway" id="UPA00219"/>
<dbReference type="Proteomes" id="UP000001226">
    <property type="component" value="Chromosome"/>
</dbReference>
<dbReference type="GO" id="GO:0005829">
    <property type="term" value="C:cytosol"/>
    <property type="evidence" value="ECO:0007669"/>
    <property type="project" value="TreeGrafter"/>
</dbReference>
<dbReference type="GO" id="GO:0005524">
    <property type="term" value="F:ATP binding"/>
    <property type="evidence" value="ECO:0007669"/>
    <property type="project" value="UniProtKB-KW"/>
</dbReference>
<dbReference type="GO" id="GO:0008716">
    <property type="term" value="F:D-alanine-D-alanine ligase activity"/>
    <property type="evidence" value="ECO:0007669"/>
    <property type="project" value="UniProtKB-UniRule"/>
</dbReference>
<dbReference type="GO" id="GO:0046872">
    <property type="term" value="F:metal ion binding"/>
    <property type="evidence" value="ECO:0007669"/>
    <property type="project" value="UniProtKB-KW"/>
</dbReference>
<dbReference type="GO" id="GO:0071555">
    <property type="term" value="P:cell wall organization"/>
    <property type="evidence" value="ECO:0007669"/>
    <property type="project" value="UniProtKB-KW"/>
</dbReference>
<dbReference type="GO" id="GO:0009252">
    <property type="term" value="P:peptidoglycan biosynthetic process"/>
    <property type="evidence" value="ECO:0007669"/>
    <property type="project" value="UniProtKB-UniRule"/>
</dbReference>
<dbReference type="GO" id="GO:0008360">
    <property type="term" value="P:regulation of cell shape"/>
    <property type="evidence" value="ECO:0007669"/>
    <property type="project" value="UniProtKB-KW"/>
</dbReference>
<dbReference type="FunFam" id="3.30.1490.20:FF:000007">
    <property type="entry name" value="D-alanine--D-alanine ligase"/>
    <property type="match status" value="1"/>
</dbReference>
<dbReference type="FunFam" id="3.30.470.20:FF:000008">
    <property type="entry name" value="D-alanine--D-alanine ligase"/>
    <property type="match status" value="1"/>
</dbReference>
<dbReference type="FunFam" id="3.40.50.20:FF:000013">
    <property type="entry name" value="D-alanine--D-alanine ligase"/>
    <property type="match status" value="1"/>
</dbReference>
<dbReference type="Gene3D" id="3.40.50.20">
    <property type="match status" value="1"/>
</dbReference>
<dbReference type="Gene3D" id="3.30.1490.20">
    <property type="entry name" value="ATP-grasp fold, A domain"/>
    <property type="match status" value="1"/>
</dbReference>
<dbReference type="Gene3D" id="3.30.470.20">
    <property type="entry name" value="ATP-grasp fold, B domain"/>
    <property type="match status" value="1"/>
</dbReference>
<dbReference type="HAMAP" id="MF_00047">
    <property type="entry name" value="Dala_Dala_lig"/>
    <property type="match status" value="1"/>
</dbReference>
<dbReference type="InterPro" id="IPR011761">
    <property type="entry name" value="ATP-grasp"/>
</dbReference>
<dbReference type="InterPro" id="IPR013815">
    <property type="entry name" value="ATP_grasp_subdomain_1"/>
</dbReference>
<dbReference type="InterPro" id="IPR000291">
    <property type="entry name" value="D-Ala_lig_Van_CS"/>
</dbReference>
<dbReference type="InterPro" id="IPR005905">
    <property type="entry name" value="D_ala_D_ala"/>
</dbReference>
<dbReference type="InterPro" id="IPR011095">
    <property type="entry name" value="Dala_Dala_lig_C"/>
</dbReference>
<dbReference type="InterPro" id="IPR011127">
    <property type="entry name" value="Dala_Dala_lig_N"/>
</dbReference>
<dbReference type="InterPro" id="IPR016185">
    <property type="entry name" value="PreATP-grasp_dom_sf"/>
</dbReference>
<dbReference type="NCBIfam" id="TIGR01205">
    <property type="entry name" value="D_ala_D_alaTIGR"/>
    <property type="match status" value="1"/>
</dbReference>
<dbReference type="NCBIfam" id="NF002378">
    <property type="entry name" value="PRK01372.1"/>
    <property type="match status" value="1"/>
</dbReference>
<dbReference type="PANTHER" id="PTHR23132">
    <property type="entry name" value="D-ALANINE--D-ALANINE LIGASE"/>
    <property type="match status" value="1"/>
</dbReference>
<dbReference type="PANTHER" id="PTHR23132:SF23">
    <property type="entry name" value="D-ALANINE--D-ALANINE LIGASE B"/>
    <property type="match status" value="1"/>
</dbReference>
<dbReference type="Pfam" id="PF07478">
    <property type="entry name" value="Dala_Dala_lig_C"/>
    <property type="match status" value="1"/>
</dbReference>
<dbReference type="Pfam" id="PF01820">
    <property type="entry name" value="Dala_Dala_lig_N"/>
    <property type="match status" value="1"/>
</dbReference>
<dbReference type="PIRSF" id="PIRSF039102">
    <property type="entry name" value="Ddl/VanB"/>
    <property type="match status" value="1"/>
</dbReference>
<dbReference type="SUPFAM" id="SSF56059">
    <property type="entry name" value="Glutathione synthetase ATP-binding domain-like"/>
    <property type="match status" value="1"/>
</dbReference>
<dbReference type="SUPFAM" id="SSF52440">
    <property type="entry name" value="PreATP-grasp domain"/>
    <property type="match status" value="1"/>
</dbReference>
<dbReference type="PROSITE" id="PS50975">
    <property type="entry name" value="ATP_GRASP"/>
    <property type="match status" value="1"/>
</dbReference>
<dbReference type="PROSITE" id="PS00843">
    <property type="entry name" value="DALA_DALA_LIGASE_1"/>
    <property type="match status" value="1"/>
</dbReference>
<dbReference type="PROSITE" id="PS00844">
    <property type="entry name" value="DALA_DALA_LIGASE_2"/>
    <property type="match status" value="1"/>
</dbReference>
<gene>
    <name evidence="2" type="primary">ddl</name>
    <name type="ordered locus">APP7_0020</name>
</gene>
<keyword id="KW-0067">ATP-binding</keyword>
<keyword id="KW-0133">Cell shape</keyword>
<keyword id="KW-0961">Cell wall biogenesis/degradation</keyword>
<keyword id="KW-0963">Cytoplasm</keyword>
<keyword id="KW-0436">Ligase</keyword>
<keyword id="KW-0460">Magnesium</keyword>
<keyword id="KW-0464">Manganese</keyword>
<keyword id="KW-0479">Metal-binding</keyword>
<keyword id="KW-0547">Nucleotide-binding</keyword>
<keyword id="KW-0573">Peptidoglycan synthesis</keyword>
<protein>
    <recommendedName>
        <fullName evidence="2">D-alanine--D-alanine ligase</fullName>
        <ecNumber evidence="2">6.3.2.4</ecNumber>
    </recommendedName>
    <alternativeName>
        <fullName evidence="2">D-Ala-D-Ala ligase</fullName>
    </alternativeName>
    <alternativeName>
        <fullName evidence="2">D-alanylalanine synthetase</fullName>
    </alternativeName>
</protein>
<reference key="1">
    <citation type="submission" date="2008-06" db="EMBL/GenBank/DDBJ databases">
        <title>Genome and proteome analysis of A. pleuropneumoniae serotype 7.</title>
        <authorList>
            <person name="Linke B."/>
            <person name="Buettner F."/>
            <person name="Martinez-Arias R."/>
            <person name="Goesmann A."/>
            <person name="Baltes N."/>
            <person name="Tegetmeyer H."/>
            <person name="Singh M."/>
            <person name="Gerlach G.F."/>
        </authorList>
    </citation>
    <scope>NUCLEOTIDE SEQUENCE [LARGE SCALE GENOMIC DNA]</scope>
    <source>
        <strain>AP76</strain>
    </source>
</reference>
<proteinExistence type="inferred from homology"/>
<feature type="chain" id="PRO_1000091158" description="D-alanine--D-alanine ligase">
    <location>
        <begin position="1"/>
        <end position="303"/>
    </location>
</feature>
<feature type="domain" description="ATP-grasp" evidence="2">
    <location>
        <begin position="104"/>
        <end position="300"/>
    </location>
</feature>
<feature type="binding site" evidence="2">
    <location>
        <begin position="132"/>
        <end position="187"/>
    </location>
    <ligand>
        <name>ATP</name>
        <dbReference type="ChEBI" id="CHEBI:30616"/>
    </ligand>
</feature>
<feature type="binding site" evidence="2">
    <location>
        <position position="254"/>
    </location>
    <ligand>
        <name>Mg(2+)</name>
        <dbReference type="ChEBI" id="CHEBI:18420"/>
        <label>1</label>
    </ligand>
</feature>
<feature type="binding site" evidence="2">
    <location>
        <position position="267"/>
    </location>
    <ligand>
        <name>Mg(2+)</name>
        <dbReference type="ChEBI" id="CHEBI:18420"/>
        <label>1</label>
    </ligand>
</feature>
<feature type="binding site" evidence="2">
    <location>
        <position position="267"/>
    </location>
    <ligand>
        <name>Mg(2+)</name>
        <dbReference type="ChEBI" id="CHEBI:18420"/>
        <label>2</label>
    </ligand>
</feature>
<feature type="binding site" evidence="2">
    <location>
        <position position="269"/>
    </location>
    <ligand>
        <name>Mg(2+)</name>
        <dbReference type="ChEBI" id="CHEBI:18420"/>
        <label>2</label>
    </ligand>
</feature>
<accession>B3GZL0</accession>
<comment type="function">
    <text evidence="2">Cell wall formation.</text>
</comment>
<comment type="catalytic activity">
    <reaction evidence="2">
        <text>2 D-alanine + ATP = D-alanyl-D-alanine + ADP + phosphate + H(+)</text>
        <dbReference type="Rhea" id="RHEA:11224"/>
        <dbReference type="ChEBI" id="CHEBI:15378"/>
        <dbReference type="ChEBI" id="CHEBI:30616"/>
        <dbReference type="ChEBI" id="CHEBI:43474"/>
        <dbReference type="ChEBI" id="CHEBI:57416"/>
        <dbReference type="ChEBI" id="CHEBI:57822"/>
        <dbReference type="ChEBI" id="CHEBI:456216"/>
        <dbReference type="EC" id="6.3.2.4"/>
    </reaction>
</comment>
<comment type="cofactor">
    <cofactor evidence="1">
        <name>Mg(2+)</name>
        <dbReference type="ChEBI" id="CHEBI:18420"/>
    </cofactor>
    <cofactor evidence="1">
        <name>Mn(2+)</name>
        <dbReference type="ChEBI" id="CHEBI:29035"/>
    </cofactor>
    <text evidence="1">Binds 2 magnesium or manganese ions per subunit.</text>
</comment>
<comment type="pathway">
    <text evidence="2">Cell wall biogenesis; peptidoglycan biosynthesis.</text>
</comment>
<comment type="subcellular location">
    <subcellularLocation>
        <location evidence="2">Cytoplasm</location>
    </subcellularLocation>
</comment>
<comment type="similarity">
    <text evidence="2">Belongs to the D-alanine--D-alanine ligase family.</text>
</comment>
<organism>
    <name type="scientific">Actinobacillus pleuropneumoniae serotype 7 (strain AP76)</name>
    <dbReference type="NCBI Taxonomy" id="537457"/>
    <lineage>
        <taxon>Bacteria</taxon>
        <taxon>Pseudomonadati</taxon>
        <taxon>Pseudomonadota</taxon>
        <taxon>Gammaproteobacteria</taxon>
        <taxon>Pasteurellales</taxon>
        <taxon>Pasteurellaceae</taxon>
        <taxon>Actinobacillus</taxon>
    </lineage>
</organism>
<name>DDL_ACTP7</name>
<sequence length="303" mass="32704">MSIKDEKIAVLFGGVSQEREVSLNSGAAVTEALKSLGYNVEGIDTKDFPIEKLKEKGIQRVFNILHGGIGENGVLQGALEQMGIPYTGCGVMASAVTLDKFRTKLMWQAVGLPTADMVVVRRGEAVDSEQIIAKLGLPVFVKPSSEGSSVGVTKVKTVEQLLPAVEEALKFDSIVLVEAFLAGKEYSVPVLDGQVLPAVQIIPEGEFYDYHAKYISDNTQYLVPALSDDRQAEVAELVKAAYEVVGCRGWSRIDVMEDANGHFNLVEVNTCPGMTSHSIFPKSAATVGIPFEKLVERVLELSA</sequence>